<evidence type="ECO:0000255" key="1">
    <source>
        <dbReference type="HAMAP-Rule" id="MF_01209"/>
    </source>
</evidence>
<feature type="chain" id="PRO_0000112344" description="Carbamoyl phosphate synthase small chain">
    <location>
        <begin position="1"/>
        <end position="379"/>
    </location>
</feature>
<feature type="domain" description="Glutamine amidotransferase type-1" evidence="1">
    <location>
        <begin position="193"/>
        <end position="379"/>
    </location>
</feature>
<feature type="region of interest" description="CPSase" evidence="1">
    <location>
        <begin position="1"/>
        <end position="189"/>
    </location>
</feature>
<feature type="active site" description="Nucleophile" evidence="1">
    <location>
        <position position="269"/>
    </location>
</feature>
<feature type="active site" evidence="1">
    <location>
        <position position="353"/>
    </location>
</feature>
<feature type="active site" evidence="1">
    <location>
        <position position="355"/>
    </location>
</feature>
<feature type="binding site" evidence="1">
    <location>
        <position position="47"/>
    </location>
    <ligand>
        <name>L-glutamine</name>
        <dbReference type="ChEBI" id="CHEBI:58359"/>
    </ligand>
</feature>
<feature type="binding site" evidence="1">
    <location>
        <position position="241"/>
    </location>
    <ligand>
        <name>L-glutamine</name>
        <dbReference type="ChEBI" id="CHEBI:58359"/>
    </ligand>
</feature>
<feature type="binding site" evidence="1">
    <location>
        <position position="243"/>
    </location>
    <ligand>
        <name>L-glutamine</name>
        <dbReference type="ChEBI" id="CHEBI:58359"/>
    </ligand>
</feature>
<feature type="binding site" evidence="1">
    <location>
        <position position="270"/>
    </location>
    <ligand>
        <name>L-glutamine</name>
        <dbReference type="ChEBI" id="CHEBI:58359"/>
    </ligand>
</feature>
<feature type="binding site" evidence="1">
    <location>
        <position position="273"/>
    </location>
    <ligand>
        <name>L-glutamine</name>
        <dbReference type="ChEBI" id="CHEBI:58359"/>
    </ligand>
</feature>
<feature type="binding site" evidence="1">
    <location>
        <position position="311"/>
    </location>
    <ligand>
        <name>L-glutamine</name>
        <dbReference type="ChEBI" id="CHEBI:58359"/>
    </ligand>
</feature>
<feature type="binding site" evidence="1">
    <location>
        <position position="313"/>
    </location>
    <ligand>
        <name>L-glutamine</name>
        <dbReference type="ChEBI" id="CHEBI:58359"/>
    </ligand>
</feature>
<feature type="binding site" evidence="1">
    <location>
        <position position="314"/>
    </location>
    <ligand>
        <name>L-glutamine</name>
        <dbReference type="ChEBI" id="CHEBI:58359"/>
    </ligand>
</feature>
<gene>
    <name evidence="1" type="primary">carA</name>
    <name type="ordered locus">VP0470</name>
</gene>
<proteinExistence type="inferred from homology"/>
<dbReference type="EC" id="6.3.5.5" evidence="1"/>
<dbReference type="EMBL" id="BA000031">
    <property type="protein sequence ID" value="BAC58733.1"/>
    <property type="molecule type" value="Genomic_DNA"/>
</dbReference>
<dbReference type="RefSeq" id="NP_796849.1">
    <property type="nucleotide sequence ID" value="NC_004603.1"/>
</dbReference>
<dbReference type="RefSeq" id="WP_011105665.1">
    <property type="nucleotide sequence ID" value="NC_004603.1"/>
</dbReference>
<dbReference type="SMR" id="Q87SF4"/>
<dbReference type="GeneID" id="1187938"/>
<dbReference type="KEGG" id="vpa:VP0470"/>
<dbReference type="PATRIC" id="fig|223926.6.peg.448"/>
<dbReference type="eggNOG" id="COG0505">
    <property type="taxonomic scope" value="Bacteria"/>
</dbReference>
<dbReference type="HOGENOM" id="CLU_035901_2_1_6"/>
<dbReference type="UniPathway" id="UPA00068">
    <property type="reaction ID" value="UER00171"/>
</dbReference>
<dbReference type="UniPathway" id="UPA00070">
    <property type="reaction ID" value="UER00115"/>
</dbReference>
<dbReference type="Proteomes" id="UP000002493">
    <property type="component" value="Chromosome 1"/>
</dbReference>
<dbReference type="GO" id="GO:0005524">
    <property type="term" value="F:ATP binding"/>
    <property type="evidence" value="ECO:0007669"/>
    <property type="project" value="UniProtKB-UniRule"/>
</dbReference>
<dbReference type="GO" id="GO:0004088">
    <property type="term" value="F:carbamoyl-phosphate synthase (glutamine-hydrolyzing) activity"/>
    <property type="evidence" value="ECO:0007669"/>
    <property type="project" value="UniProtKB-UniRule"/>
</dbReference>
<dbReference type="GO" id="GO:0004359">
    <property type="term" value="F:glutaminase activity"/>
    <property type="evidence" value="ECO:0007669"/>
    <property type="project" value="RHEA"/>
</dbReference>
<dbReference type="GO" id="GO:0006207">
    <property type="term" value="P:'de novo' pyrimidine nucleobase biosynthetic process"/>
    <property type="evidence" value="ECO:0007669"/>
    <property type="project" value="InterPro"/>
</dbReference>
<dbReference type="GO" id="GO:0044205">
    <property type="term" value="P:'de novo' UMP biosynthetic process"/>
    <property type="evidence" value="ECO:0007669"/>
    <property type="project" value="UniProtKB-UniRule"/>
</dbReference>
<dbReference type="GO" id="GO:0006541">
    <property type="term" value="P:glutamine metabolic process"/>
    <property type="evidence" value="ECO:0007669"/>
    <property type="project" value="InterPro"/>
</dbReference>
<dbReference type="GO" id="GO:0006526">
    <property type="term" value="P:L-arginine biosynthetic process"/>
    <property type="evidence" value="ECO:0007669"/>
    <property type="project" value="UniProtKB-UniRule"/>
</dbReference>
<dbReference type="CDD" id="cd01744">
    <property type="entry name" value="GATase1_CPSase"/>
    <property type="match status" value="1"/>
</dbReference>
<dbReference type="FunFam" id="3.40.50.880:FF:000011">
    <property type="entry name" value="Carbamoyl-phosphate synthase small chain"/>
    <property type="match status" value="1"/>
</dbReference>
<dbReference type="FunFam" id="3.50.30.20:FF:000001">
    <property type="entry name" value="Carbamoyl-phosphate synthase small chain"/>
    <property type="match status" value="1"/>
</dbReference>
<dbReference type="Gene3D" id="3.40.50.880">
    <property type="match status" value="1"/>
</dbReference>
<dbReference type="Gene3D" id="3.50.30.20">
    <property type="entry name" value="Carbamoyl-phosphate synthase small subunit, N-terminal domain"/>
    <property type="match status" value="1"/>
</dbReference>
<dbReference type="HAMAP" id="MF_01209">
    <property type="entry name" value="CPSase_S_chain"/>
    <property type="match status" value="1"/>
</dbReference>
<dbReference type="InterPro" id="IPR050472">
    <property type="entry name" value="Anth_synth/Amidotransfase"/>
</dbReference>
<dbReference type="InterPro" id="IPR006274">
    <property type="entry name" value="CarbamoylP_synth_ssu"/>
</dbReference>
<dbReference type="InterPro" id="IPR002474">
    <property type="entry name" value="CarbamoylP_synth_ssu_N"/>
</dbReference>
<dbReference type="InterPro" id="IPR036480">
    <property type="entry name" value="CarbP_synth_ssu_N_sf"/>
</dbReference>
<dbReference type="InterPro" id="IPR029062">
    <property type="entry name" value="Class_I_gatase-like"/>
</dbReference>
<dbReference type="InterPro" id="IPR035686">
    <property type="entry name" value="CPSase_GATase1"/>
</dbReference>
<dbReference type="InterPro" id="IPR017926">
    <property type="entry name" value="GATASE"/>
</dbReference>
<dbReference type="NCBIfam" id="TIGR01368">
    <property type="entry name" value="CPSaseIIsmall"/>
    <property type="match status" value="1"/>
</dbReference>
<dbReference type="NCBIfam" id="NF009475">
    <property type="entry name" value="PRK12838.1"/>
    <property type="match status" value="1"/>
</dbReference>
<dbReference type="PANTHER" id="PTHR43418:SF7">
    <property type="entry name" value="CARBAMOYL-PHOSPHATE SYNTHASE SMALL CHAIN"/>
    <property type="match status" value="1"/>
</dbReference>
<dbReference type="PANTHER" id="PTHR43418">
    <property type="entry name" value="MULTIFUNCTIONAL TRYPTOPHAN BIOSYNTHESIS PROTEIN-RELATED"/>
    <property type="match status" value="1"/>
</dbReference>
<dbReference type="Pfam" id="PF00988">
    <property type="entry name" value="CPSase_sm_chain"/>
    <property type="match status" value="1"/>
</dbReference>
<dbReference type="Pfam" id="PF00117">
    <property type="entry name" value="GATase"/>
    <property type="match status" value="1"/>
</dbReference>
<dbReference type="PRINTS" id="PR00097">
    <property type="entry name" value="ANTSNTHASEII"/>
</dbReference>
<dbReference type="PRINTS" id="PR00099">
    <property type="entry name" value="CPSGATASE"/>
</dbReference>
<dbReference type="PRINTS" id="PR00096">
    <property type="entry name" value="GATASE"/>
</dbReference>
<dbReference type="SMART" id="SM01097">
    <property type="entry name" value="CPSase_sm_chain"/>
    <property type="match status" value="1"/>
</dbReference>
<dbReference type="SUPFAM" id="SSF52021">
    <property type="entry name" value="Carbamoyl phosphate synthetase, small subunit N-terminal domain"/>
    <property type="match status" value="1"/>
</dbReference>
<dbReference type="SUPFAM" id="SSF52317">
    <property type="entry name" value="Class I glutamine amidotransferase-like"/>
    <property type="match status" value="1"/>
</dbReference>
<dbReference type="PROSITE" id="PS51273">
    <property type="entry name" value="GATASE_TYPE_1"/>
    <property type="match status" value="1"/>
</dbReference>
<reference key="1">
    <citation type="journal article" date="2003" name="Lancet">
        <title>Genome sequence of Vibrio parahaemolyticus: a pathogenic mechanism distinct from that of V. cholerae.</title>
        <authorList>
            <person name="Makino K."/>
            <person name="Oshima K."/>
            <person name="Kurokawa K."/>
            <person name="Yokoyama K."/>
            <person name="Uda T."/>
            <person name="Tagomori K."/>
            <person name="Iijima Y."/>
            <person name="Najima M."/>
            <person name="Nakano M."/>
            <person name="Yamashita A."/>
            <person name="Kubota Y."/>
            <person name="Kimura S."/>
            <person name="Yasunaga T."/>
            <person name="Honda T."/>
            <person name="Shinagawa H."/>
            <person name="Hattori M."/>
            <person name="Iida T."/>
        </authorList>
    </citation>
    <scope>NUCLEOTIDE SEQUENCE [LARGE SCALE GENOMIC DNA]</scope>
    <source>
        <strain>RIMD 2210633</strain>
    </source>
</reference>
<comment type="function">
    <text evidence="1">Small subunit of the glutamine-dependent carbamoyl phosphate synthetase (CPSase). CPSase catalyzes the formation of carbamoyl phosphate from the ammonia moiety of glutamine, carbonate, and phosphate donated by ATP, constituting the first step of 2 biosynthetic pathways, one leading to arginine and/or urea and the other to pyrimidine nucleotides. The small subunit (glutamine amidotransferase) binds and cleaves glutamine to supply the large subunit with the substrate ammonia.</text>
</comment>
<comment type="catalytic activity">
    <reaction evidence="1">
        <text>hydrogencarbonate + L-glutamine + 2 ATP + H2O = carbamoyl phosphate + L-glutamate + 2 ADP + phosphate + 2 H(+)</text>
        <dbReference type="Rhea" id="RHEA:18633"/>
        <dbReference type="ChEBI" id="CHEBI:15377"/>
        <dbReference type="ChEBI" id="CHEBI:15378"/>
        <dbReference type="ChEBI" id="CHEBI:17544"/>
        <dbReference type="ChEBI" id="CHEBI:29985"/>
        <dbReference type="ChEBI" id="CHEBI:30616"/>
        <dbReference type="ChEBI" id="CHEBI:43474"/>
        <dbReference type="ChEBI" id="CHEBI:58228"/>
        <dbReference type="ChEBI" id="CHEBI:58359"/>
        <dbReference type="ChEBI" id="CHEBI:456216"/>
        <dbReference type="EC" id="6.3.5.5"/>
    </reaction>
</comment>
<comment type="catalytic activity">
    <molecule>Carbamoyl phosphate synthase small chain</molecule>
    <reaction evidence="1">
        <text>L-glutamine + H2O = L-glutamate + NH4(+)</text>
        <dbReference type="Rhea" id="RHEA:15889"/>
        <dbReference type="ChEBI" id="CHEBI:15377"/>
        <dbReference type="ChEBI" id="CHEBI:28938"/>
        <dbReference type="ChEBI" id="CHEBI:29985"/>
        <dbReference type="ChEBI" id="CHEBI:58359"/>
    </reaction>
</comment>
<comment type="pathway">
    <text evidence="1">Amino-acid biosynthesis; L-arginine biosynthesis; carbamoyl phosphate from bicarbonate: step 1/1.</text>
</comment>
<comment type="pathway">
    <text evidence="1">Pyrimidine metabolism; UMP biosynthesis via de novo pathway; (S)-dihydroorotate from bicarbonate: step 1/3.</text>
</comment>
<comment type="subunit">
    <text evidence="1">Composed of two chains; the small (or glutamine) chain promotes the hydrolysis of glutamine to ammonia, which is used by the large (or ammonia) chain to synthesize carbamoyl phosphate. Tetramer of heterodimers (alpha,beta)4.</text>
</comment>
<comment type="similarity">
    <text evidence="1">Belongs to the CarA family.</text>
</comment>
<keyword id="KW-0028">Amino-acid biosynthesis</keyword>
<keyword id="KW-0055">Arginine biosynthesis</keyword>
<keyword id="KW-0067">ATP-binding</keyword>
<keyword id="KW-0315">Glutamine amidotransferase</keyword>
<keyword id="KW-0436">Ligase</keyword>
<keyword id="KW-0547">Nucleotide-binding</keyword>
<keyword id="KW-0665">Pyrimidine biosynthesis</keyword>
<protein>
    <recommendedName>
        <fullName evidence="1">Carbamoyl phosphate synthase small chain</fullName>
        <ecNumber evidence="1">6.3.5.5</ecNumber>
    </recommendedName>
    <alternativeName>
        <fullName evidence="1">Carbamoyl phosphate synthetase glutamine chain</fullName>
    </alternativeName>
</protein>
<name>CARA_VIBPA</name>
<organism>
    <name type="scientific">Vibrio parahaemolyticus serotype O3:K6 (strain RIMD 2210633)</name>
    <dbReference type="NCBI Taxonomy" id="223926"/>
    <lineage>
        <taxon>Bacteria</taxon>
        <taxon>Pseudomonadati</taxon>
        <taxon>Pseudomonadota</taxon>
        <taxon>Gammaproteobacteria</taxon>
        <taxon>Vibrionales</taxon>
        <taxon>Vibrionaceae</taxon>
        <taxon>Vibrio</taxon>
    </lineage>
</organism>
<accession>Q87SF4</accession>
<sequence length="379" mass="41026">MSKLALLVLEDGTVFRGVSIGADGVSVGEVVFNTSMTGYQEILTDPSYSQQIVTLTYPHIGNTGTNSEDEESSSIHAQGLVIRDLPLIASNFRNEQSLSDYLKSQNIVGIADIDTRKLTRILREKGAQNGCIVAGNNLDEALALAKAKEFPGLKGMDLAKEVTTKEAYQWKQGSWTLESGLPEAKDDSELPYHVVAYDFGAKRNILRMLVDRGCRLTVVPAETSAEEVLALNPDGVFLSNGPGDPEPCTYAIEATKVFLEKGLPIFGICLGHQILALASGAQTVKMKFGHHGANHPVKDLERNVVMITSQNHGFAADEATLPENLRATHVSLFDGSLQGIHRTDKPAFSFQGHPEASPGPHDAAPLFDHFIELIKKHSA</sequence>